<dbReference type="EC" id="2.1.1.72" evidence="9"/>
<dbReference type="EMBL" id="X06288">
    <property type="protein sequence ID" value="CAA29616.1"/>
    <property type="molecule type" value="Genomic_DNA"/>
</dbReference>
<dbReference type="EMBL" id="AJ634453">
    <property type="protein sequence ID" value="CAG24072.1"/>
    <property type="molecule type" value="Genomic_DNA"/>
</dbReference>
<dbReference type="PIR" id="S03208">
    <property type="entry name" value="S03208"/>
</dbReference>
<dbReference type="PDB" id="4ZCF">
    <property type="method" value="X-ray"/>
    <property type="resolution" value="2.60 A"/>
    <property type="chains" value="A/B=1-644"/>
</dbReference>
<dbReference type="PDBsum" id="4ZCF"/>
<dbReference type="SMR" id="P12364"/>
<dbReference type="REBASE" id="3389">
    <property type="entry name" value="M.EcoP15I"/>
</dbReference>
<dbReference type="BRENDA" id="3.1.21.5">
    <property type="organism ID" value="2026"/>
</dbReference>
<dbReference type="EvolutionaryTrace" id="P12364"/>
<dbReference type="PRO" id="PR:P12364"/>
<dbReference type="GO" id="GO:0003677">
    <property type="term" value="F:DNA binding"/>
    <property type="evidence" value="ECO:0007669"/>
    <property type="project" value="UniProtKB-KW"/>
</dbReference>
<dbReference type="GO" id="GO:0008170">
    <property type="term" value="F:N-methyltransferase activity"/>
    <property type="evidence" value="ECO:0007669"/>
    <property type="project" value="InterPro"/>
</dbReference>
<dbReference type="GO" id="GO:0009007">
    <property type="term" value="F:site-specific DNA-methyltransferase (adenine-specific) activity"/>
    <property type="evidence" value="ECO:0007669"/>
    <property type="project" value="UniProtKB-EC"/>
</dbReference>
<dbReference type="GO" id="GO:0009307">
    <property type="term" value="P:DNA restriction-modification system"/>
    <property type="evidence" value="ECO:0007669"/>
    <property type="project" value="UniProtKB-KW"/>
</dbReference>
<dbReference type="GO" id="GO:0032259">
    <property type="term" value="P:methylation"/>
    <property type="evidence" value="ECO:0007669"/>
    <property type="project" value="UniProtKB-KW"/>
</dbReference>
<dbReference type="Gene3D" id="3.40.50.150">
    <property type="entry name" value="Vaccinia Virus protein VP39"/>
    <property type="match status" value="1"/>
</dbReference>
<dbReference type="InterPro" id="IPR002941">
    <property type="entry name" value="DNA_methylase_N4/N6"/>
</dbReference>
<dbReference type="InterPro" id="IPR002052">
    <property type="entry name" value="DNA_methylase_N6_adenine_CS"/>
</dbReference>
<dbReference type="InterPro" id="IPR002295">
    <property type="entry name" value="N4/N6-MTase_EcoPI_Mod-like"/>
</dbReference>
<dbReference type="InterPro" id="IPR029063">
    <property type="entry name" value="SAM-dependent_MTases_sf"/>
</dbReference>
<dbReference type="InterPro" id="IPR041405">
    <property type="entry name" value="T3RM_EcoP15I_C"/>
</dbReference>
<dbReference type="Pfam" id="PF01555">
    <property type="entry name" value="N6_N4_Mtase"/>
    <property type="match status" value="1"/>
</dbReference>
<dbReference type="Pfam" id="PF18273">
    <property type="entry name" value="T3RM_EcoP15I_C"/>
    <property type="match status" value="1"/>
</dbReference>
<dbReference type="PIRSF" id="PIRSF015855">
    <property type="entry name" value="TypeIII_Mtase_mKpnI"/>
    <property type="match status" value="1"/>
</dbReference>
<dbReference type="PRINTS" id="PR00506">
    <property type="entry name" value="D21N6MTFRASE"/>
</dbReference>
<dbReference type="SUPFAM" id="SSF53335">
    <property type="entry name" value="S-adenosyl-L-methionine-dependent methyltransferases"/>
    <property type="match status" value="1"/>
</dbReference>
<dbReference type="PROSITE" id="PS00092">
    <property type="entry name" value="N6_MTASE"/>
    <property type="match status" value="1"/>
</dbReference>
<geneLocation type="plasmid">
    <name>p15B</name>
</geneLocation>
<name>T3MO_ECOLX</name>
<gene>
    <name evidence="7" type="primary">mod</name>
    <name evidence="6" type="synonym">ecoP15Imod</name>
</gene>
<sequence length="644" mass="74094">MKKETIFSEVETANSKQLAVLKANFPQCFDKNGAFIQEKLLEIIRASEVELSKESYSLNWLGKSYARLLANLPPKTLLAEDKTHNQQEENKNSQHLLIKGDNLEVLKHMVNAYAEKVKMIYIDPPYNTGKDGFVYNDDRKFTPEQLSELAGIDLDEAKRILEFTTKGSSSHSAWLTFIYPRLYIARELMREDGTIFISIDHNEFSQLKLVCDEIFGEQNHVGDLVWKNATDNNPSNIAVEHEYIIVYTKNKEQLISEWKSNISDVKNLLVNIGEEFASKYTGNELQEKYTQWFREHRSELWPLDRYKYIDKDGIYTGSQSVHNPGKEGYRYDIIHPKTKKPCKQPLMGYRFPLDTMDRLLSEEKIIFGDDENKIIELKVYAKDYKQKLSSVIHLDGRVATNELKELFPEMTQPFTNAKTIKLVEDLISFACDGEGIVLDFFAGSGTTAHTVFNLNNKNKTSYQFITVQLDEPTKDKSDAMKHGYNTIFDLTKERLIRASKKNRDQGFKVYQLMPDFRAKDESELTLSNHTFFDDVVLTPEQYDTLLTTWCLYDGSLLTTPIEDVDLGGYKAHLCDGRLYLIAPNFTSEALKALLQKVDSDKDFAPNKVVFYGSNFESAKQMELNEALKSYANKKSIELDLVVRN</sequence>
<accession>P12364</accession>
<accession>Q5ZND1</accession>
<comment type="function">
    <text evidence="2 3 5">A beta subtype methylase that binds the system-specific DNA recognition site 5'-CAGCAG-3' and methylates A-5 (of only 1 strand as the other does not have an A residue). DNA restriction requires both the Res and Mod subunits (PubMed:11178902, PubMed:12654995). The A-5 nucleotide flips into the catalytic pocket of one Mod subunit for modification, while the other Mod subunit makes most of the DNA sequence-specific contacts (PubMed:26067164).</text>
</comment>
<comment type="catalytic activity">
    <reaction evidence="9">
        <text>a 2'-deoxyadenosine in DNA + S-adenosyl-L-methionine = an N(6)-methyl-2'-deoxyadenosine in DNA + S-adenosyl-L-homocysteine + H(+)</text>
        <dbReference type="Rhea" id="RHEA:15197"/>
        <dbReference type="Rhea" id="RHEA-COMP:12418"/>
        <dbReference type="Rhea" id="RHEA-COMP:12419"/>
        <dbReference type="ChEBI" id="CHEBI:15378"/>
        <dbReference type="ChEBI" id="CHEBI:57856"/>
        <dbReference type="ChEBI" id="CHEBI:59789"/>
        <dbReference type="ChEBI" id="CHEBI:90615"/>
        <dbReference type="ChEBI" id="CHEBI:90616"/>
        <dbReference type="EC" id="2.1.1.72"/>
    </reaction>
</comment>
<comment type="subunit">
    <text evidence="2 3 9">Forms a homodimer capable of methylating the target sequence in the absence of Res (Probable). A heterotetramer with stoichiometry Res(2)Mod(2) (PubMed:11178902). A heterotrimer with stoichiometry Res(1)Mod(2) (PubMed:26067164).</text>
</comment>
<comment type="miscellaneous">
    <text evidence="7">This R-M system is also called EcoP15.</text>
</comment>
<comment type="similarity">
    <text evidence="8">Belongs to the N(4)/N(6)-methyltransferase family.</text>
</comment>
<proteinExistence type="evidence at protein level"/>
<organism>
    <name type="scientific">Escherichia coli</name>
    <dbReference type="NCBI Taxonomy" id="562"/>
    <lineage>
        <taxon>Bacteria</taxon>
        <taxon>Pseudomonadati</taxon>
        <taxon>Pseudomonadota</taxon>
        <taxon>Gammaproteobacteria</taxon>
        <taxon>Enterobacterales</taxon>
        <taxon>Enterobacteriaceae</taxon>
        <taxon>Escherichia</taxon>
    </lineage>
</organism>
<keyword id="KW-0002">3D-structure</keyword>
<keyword id="KW-0238">DNA-binding</keyword>
<keyword id="KW-0489">Methyltransferase</keyword>
<keyword id="KW-0614">Plasmid</keyword>
<keyword id="KW-0680">Restriction system</keyword>
<keyword id="KW-0949">S-adenosyl-L-methionine</keyword>
<keyword id="KW-0808">Transferase</keyword>
<evidence type="ECO:0000255" key="1"/>
<evidence type="ECO:0000269" key="2">
    <source>
    </source>
</evidence>
<evidence type="ECO:0000269" key="3">
    <source>
    </source>
</evidence>
<evidence type="ECO:0000303" key="4">
    <source>
    </source>
</evidence>
<evidence type="ECO:0000303" key="5">
    <source>
    </source>
</evidence>
<evidence type="ECO:0000303" key="6">
    <source>
    </source>
</evidence>
<evidence type="ECO:0000303" key="7">
    <source>
    </source>
</evidence>
<evidence type="ECO:0000305" key="8"/>
<evidence type="ECO:0000305" key="9">
    <source>
    </source>
</evidence>
<evidence type="ECO:0007744" key="10">
    <source>
        <dbReference type="PDB" id="4ZCF"/>
    </source>
</evidence>
<evidence type="ECO:0007829" key="11">
    <source>
        <dbReference type="PDB" id="4ZCF"/>
    </source>
</evidence>
<reference key="1">
    <citation type="journal article" date="1988" name="J. Mol. Biol.">
        <title>Type III DNA restriction and modification systems EcoP1 and EcoP15. Nucleotide sequence of the EcoP1 operon, the EcoP15 mod gene and some EcoP1 mod mutants.</title>
        <authorList>
            <person name="Huembelin M."/>
            <person name="Suri B."/>
            <person name="Rao D.N."/>
            <person name="Hornby D.P."/>
            <person name="Eberle H."/>
            <person name="Pripfl T."/>
            <person name="Kenel S."/>
            <person name="Bickle T.A."/>
        </authorList>
    </citation>
    <scope>NUCLEOTIDE SEQUENCE [GENOMIC DNA]</scope>
    <source>
        <plasmid>p15B</plasmid>
    </source>
</reference>
<reference key="2">
    <citation type="journal article" date="2004" name="J. Biotechnol.">
        <title>Overexpression and affinity chromatography purification of the Type III restriction endonuclease EcoP15I for use in transcriptome analysis.</title>
        <authorList>
            <person name="Moencke-Buchner E."/>
            <person name="Mackeldanz P."/>
            <person name="Krueger D.H."/>
            <person name="Reuter M."/>
        </authorList>
    </citation>
    <scope>NUCLEOTIDE SEQUENCE [GENOMIC DNA]</scope>
    <scope>SEQUENCE REVISION TO 156; 343; 472 AND 513</scope>
    <source>
        <plasmid>p15B</plasmid>
    </source>
</reference>
<reference key="3">
    <citation type="journal article" date="2001" name="J. Mol. Biol.">
        <title>Subunit assembly and mode of DNA cleavage of the type III restriction endonucleases EcoP1I and EcoP15I.</title>
        <authorList>
            <person name="Janscak P."/>
            <person name="Sandmeier U."/>
            <person name="Szczelkun M.D."/>
            <person name="Bickle T.A."/>
        </authorList>
    </citation>
    <scope>FUNCTION</scope>
    <scope>SUBUNIT</scope>
</reference>
<reference key="4">
    <citation type="journal article" date="2003" name="Nucleic Acids Res.">
        <title>A nomenclature for restriction enzymes, DNA methyltransferases, homing endonucleases and their genes.</title>
        <authorList>
            <person name="Roberts R.J."/>
            <person name="Belfort M."/>
            <person name="Bestor T."/>
            <person name="Bhagwat A.S."/>
            <person name="Bickle T.A."/>
            <person name="Bitinaite J."/>
            <person name="Blumenthal R.M."/>
            <person name="Degtyarev S.K."/>
            <person name="Dryden D.T."/>
            <person name="Dybvig K."/>
            <person name="Firman K."/>
            <person name="Gromova E.S."/>
            <person name="Gumport R.I."/>
            <person name="Halford S.E."/>
            <person name="Hattman S."/>
            <person name="Heitman J."/>
            <person name="Hornby D.P."/>
            <person name="Janulaitis A."/>
            <person name="Jeltsch A."/>
            <person name="Josephsen J."/>
            <person name="Kiss A."/>
            <person name="Klaenhammer T.R."/>
            <person name="Kobayashi I."/>
            <person name="Kong H."/>
            <person name="Krueger D.H."/>
            <person name="Lacks S."/>
            <person name="Marinus M.G."/>
            <person name="Miyahara M."/>
            <person name="Morgan R.D."/>
            <person name="Murray N.E."/>
            <person name="Nagaraja V."/>
            <person name="Piekarowicz A."/>
            <person name="Pingoud A."/>
            <person name="Raleigh E."/>
            <person name="Rao D.N."/>
            <person name="Reich N."/>
            <person name="Repin V.E."/>
            <person name="Selker E.U."/>
            <person name="Shaw P.C."/>
            <person name="Stein D.C."/>
            <person name="Stoddard B.L."/>
            <person name="Szybalski W."/>
            <person name="Trautner T.A."/>
            <person name="Van Etten J.L."/>
            <person name="Vitor J.M."/>
            <person name="Wilson G.G."/>
            <person name="Xu S.Y."/>
        </authorList>
    </citation>
    <scope>NOMENCLATURE</scope>
    <scope>SUBTYPE</scope>
</reference>
<reference evidence="10" key="5">
    <citation type="journal article" date="2015" name="Nat. Commun.">
        <title>Structural basis of asymmetric DNA methylation and ATP-triggered long-range diffusion by EcoP15I.</title>
        <authorList>
            <person name="Gupta Y.K."/>
            <person name="Chan S.H."/>
            <person name="Xu S.Y."/>
            <person name="Aggarwal A.K."/>
        </authorList>
    </citation>
    <scope>X-RAY CRYSTALLOGRAPHY (2.60 ANGSTROMS) IN COMPLEX WITH RES AND DNA</scope>
</reference>
<protein>
    <recommendedName>
        <fullName evidence="4">Type III restriction-modification enzyme EcoP15I Mod subunit</fullName>
        <shortName>M.EcoP15I</shortName>
        <ecNumber evidence="9">2.1.1.72</ecNumber>
    </recommendedName>
    <alternativeName>
        <fullName>EcoP15I methyltransferase</fullName>
    </alternativeName>
    <alternativeName>
        <fullName evidence="5">Type III methyltransferase M.EcoP15I</fullName>
    </alternativeName>
</protein>
<feature type="chain" id="PRO_0000088031" description="Type III restriction-modification enzyme EcoP15I Mod subunit">
    <location>
        <begin position="1"/>
        <end position="644"/>
    </location>
</feature>
<feature type="region of interest" description="Binding of S-adenosyl methionine" evidence="1">
    <location>
        <begin position="123"/>
        <end position="126"/>
    </location>
</feature>
<feature type="sequence conflict" description="In Ref. 1; CAA29616." evidence="8" ref="1">
    <original>E</original>
    <variation>Q</variation>
    <location>
        <position position="156"/>
    </location>
</feature>
<feature type="sequence conflict" description="In Ref. 1; CAA29616." evidence="8" ref="1">
    <original>K</original>
    <variation>KQ</variation>
    <location>
        <position position="343"/>
    </location>
</feature>
<feature type="helix" evidence="11">
    <location>
        <begin position="14"/>
        <end position="24"/>
    </location>
</feature>
<feature type="helix" evidence="11">
    <location>
        <begin position="26"/>
        <end position="28"/>
    </location>
</feature>
<feature type="helix" evidence="11">
    <location>
        <begin position="37"/>
        <end position="44"/>
    </location>
</feature>
<feature type="strand" evidence="11">
    <location>
        <begin position="56"/>
        <end position="60"/>
    </location>
</feature>
<feature type="helix" evidence="11">
    <location>
        <begin position="63"/>
        <end position="71"/>
    </location>
</feature>
<feature type="strand" evidence="11">
    <location>
        <begin position="76"/>
        <end position="80"/>
    </location>
</feature>
<feature type="helix" evidence="11">
    <location>
        <begin position="82"/>
        <end position="86"/>
    </location>
</feature>
<feature type="turn" evidence="11">
    <location>
        <begin position="88"/>
        <end position="92"/>
    </location>
</feature>
<feature type="strand" evidence="11">
    <location>
        <begin position="96"/>
        <end position="100"/>
    </location>
</feature>
<feature type="helix" evidence="11">
    <location>
        <begin position="102"/>
        <end position="113"/>
    </location>
</feature>
<feature type="turn" evidence="11">
    <location>
        <begin position="114"/>
        <end position="116"/>
    </location>
</feature>
<feature type="strand" evidence="11">
    <location>
        <begin position="117"/>
        <end position="122"/>
    </location>
</feature>
<feature type="strand" evidence="11">
    <location>
        <begin position="129"/>
        <end position="131"/>
    </location>
</feature>
<feature type="helix" evidence="11">
    <location>
        <begin position="143"/>
        <end position="150"/>
    </location>
</feature>
<feature type="helix" evidence="11">
    <location>
        <begin position="154"/>
        <end position="164"/>
    </location>
</feature>
<feature type="helix" evidence="11">
    <location>
        <begin position="171"/>
        <end position="188"/>
    </location>
</feature>
<feature type="strand" evidence="11">
    <location>
        <begin position="189"/>
        <end position="199"/>
    </location>
</feature>
<feature type="turn" evidence="11">
    <location>
        <begin position="201"/>
        <end position="203"/>
    </location>
</feature>
<feature type="helix" evidence="11">
    <location>
        <begin position="204"/>
        <end position="215"/>
    </location>
</feature>
<feature type="helix" evidence="11">
    <location>
        <begin position="217"/>
        <end position="219"/>
    </location>
</feature>
<feature type="strand" evidence="11">
    <location>
        <begin position="220"/>
        <end position="227"/>
    </location>
</feature>
<feature type="strand" evidence="11">
    <location>
        <begin position="236"/>
        <end position="238"/>
    </location>
</feature>
<feature type="strand" evidence="11">
    <location>
        <begin position="241"/>
        <end position="249"/>
    </location>
</feature>
<feature type="turn" evidence="11">
    <location>
        <begin position="251"/>
        <end position="253"/>
    </location>
</feature>
<feature type="helix" evidence="11">
    <location>
        <begin position="264"/>
        <end position="279"/>
    </location>
</feature>
<feature type="helix" evidence="11">
    <location>
        <begin position="283"/>
        <end position="296"/>
    </location>
</feature>
<feature type="helix" evidence="11">
    <location>
        <begin position="297"/>
        <end position="299"/>
    </location>
</feature>
<feature type="strand" evidence="11">
    <location>
        <begin position="308"/>
        <end position="310"/>
    </location>
</feature>
<feature type="strand" evidence="11">
    <location>
        <begin position="313"/>
        <end position="318"/>
    </location>
</feature>
<feature type="strand" evidence="11">
    <location>
        <begin position="324"/>
        <end position="326"/>
    </location>
</feature>
<feature type="turn" evidence="11">
    <location>
        <begin position="336"/>
        <end position="338"/>
    </location>
</feature>
<feature type="strand" evidence="11">
    <location>
        <begin position="349"/>
        <end position="351"/>
    </location>
</feature>
<feature type="helix" evidence="11">
    <location>
        <begin position="353"/>
        <end position="361"/>
    </location>
</feature>
<feature type="strand" evidence="11">
    <location>
        <begin position="376"/>
        <end position="380"/>
    </location>
</feature>
<feature type="helix" evidence="11">
    <location>
        <begin position="381"/>
        <end position="383"/>
    </location>
</feature>
<feature type="strand" evidence="11">
    <location>
        <begin position="388"/>
        <end position="393"/>
    </location>
</feature>
<feature type="helix" evidence="11">
    <location>
        <begin position="396"/>
        <end position="398"/>
    </location>
</feature>
<feature type="helix" evidence="11">
    <location>
        <begin position="399"/>
        <end position="404"/>
    </location>
</feature>
<feature type="helix" evidence="11">
    <location>
        <begin position="420"/>
        <end position="430"/>
    </location>
</feature>
<feature type="strand" evidence="11">
    <location>
        <begin position="431"/>
        <end position="441"/>
    </location>
</feature>
<feature type="helix" evidence="11">
    <location>
        <begin position="446"/>
        <end position="455"/>
    </location>
</feature>
<feature type="strand" evidence="11">
    <location>
        <begin position="457"/>
        <end position="459"/>
    </location>
</feature>
<feature type="strand" evidence="11">
    <location>
        <begin position="461"/>
        <end position="468"/>
    </location>
</feature>
<feature type="helix" evidence="11">
    <location>
        <begin position="480"/>
        <end position="482"/>
    </location>
</feature>
<feature type="helix" evidence="11">
    <location>
        <begin position="487"/>
        <end position="500"/>
    </location>
</feature>
<feature type="turn" evidence="11">
    <location>
        <begin position="501"/>
        <end position="503"/>
    </location>
</feature>
<feature type="strand" evidence="11">
    <location>
        <begin position="508"/>
        <end position="514"/>
    </location>
</feature>
<feature type="helix" evidence="11">
    <location>
        <begin position="539"/>
        <end position="552"/>
    </location>
</feature>
<feature type="strand" evidence="11">
    <location>
        <begin position="562"/>
        <end position="566"/>
    </location>
</feature>
<feature type="strand" evidence="11">
    <location>
        <begin position="569"/>
        <end position="574"/>
    </location>
</feature>
<feature type="strand" evidence="11">
    <location>
        <begin position="577"/>
        <end position="580"/>
    </location>
</feature>
<feature type="helix" evidence="11">
    <location>
        <begin position="587"/>
        <end position="598"/>
    </location>
</feature>
<feature type="strand" evidence="11">
    <location>
        <begin position="606"/>
        <end position="611"/>
    </location>
</feature>
<feature type="helix" evidence="11">
    <location>
        <begin position="612"/>
        <end position="614"/>
    </location>
</feature>
<feature type="helix" evidence="11">
    <location>
        <begin position="618"/>
        <end position="629"/>
    </location>
</feature>
<feature type="strand" evidence="11">
    <location>
        <begin position="639"/>
        <end position="643"/>
    </location>
</feature>